<protein>
    <recommendedName>
        <fullName>Endo-1,4-beta-xylanase B</fullName>
        <shortName>Xylanase B</shortName>
        <ecNumber>3.2.1.8</ecNumber>
    </recommendedName>
    <alternativeName>
        <fullName>1,4-beta-D-xylan xylanohydrolase B</fullName>
    </alternativeName>
</protein>
<proteinExistence type="inferred from homology"/>
<sequence length="635" mass="73185">MNLKTAYEPYFKIGAAISRWNLHTPAHTKLLAEQFNSFTCENDMKPMYYLDREANKKDPEKYNLSPALTFENAIPYLEFAKDNKIAMRGHTLVWHNQTPKWFFCERYNENFPMADRETILARLESYIHGVLDFVQTNYPGIIYAWDVVNEIVDEGAFRKSIWTETVGEDFFIKAFEFARKYAAPEVSLFYNDYETAQPWKRDFILEKVLGPLIDKKLIDGMGMQSHLLMDHPDISEYRTALEMYGSTGLQIHITELDMHNADPSEESMHALATRYQEFFQTYLDAKKSGKANITSVTFWNLLDENSWLSGFRRETSYPLVFKGKCEAKEAYYAVLKAAVSDDSIDKWVPDYSEEDYKLQGMPTPDIKRFRENIWQENEYNYEASYGFIPNLFAYLHNDDVKRDCMLVIPGGGYCMCCSHEGELAAMEFYNRGMNAFVLSYTTDITMSVPLHKQPLEDISRAVRFIRKNASKYNIDGKKLVIMGFSAGSHVCGSLAVHFDDVKDNNPEYADISGRPDGVILSYPVITTGRYTHADSVRTLLGANPTDEELTYFSLEKQVKDNTPPCFIWQTEEDSVVPVENSYLFANALREKKIPFAHYVFPRGFHGLTVANDEFFSGWSGGEYSMEQTMRARFAV</sequence>
<reference key="1">
    <citation type="journal article" date="1991" name="Mol. Gen. Genet.">
        <title>Cloning, sequencing and expression of a gene encoding a 73 kDa xylanase enzyme from the rumen anaerobe Butyrivibrio fibrisolvens H17c.</title>
        <authorList>
            <person name="Lin L.-L."/>
            <person name="Thomson J.A."/>
        </authorList>
    </citation>
    <scope>NUCLEOTIDE SEQUENCE [GENOMIC DNA]</scope>
    <source>
        <strain>H17C</strain>
    </source>
</reference>
<gene>
    <name type="primary">xynB</name>
</gene>
<keyword id="KW-0119">Carbohydrate metabolism</keyword>
<keyword id="KW-0326">Glycosidase</keyword>
<keyword id="KW-0378">Hydrolase</keyword>
<keyword id="KW-0624">Polysaccharide degradation</keyword>
<keyword id="KW-0858">Xylan degradation</keyword>
<name>XYNB_BUTFI</name>
<dbReference type="EC" id="3.2.1.8"/>
<dbReference type="EMBL" id="X61495">
    <property type="protein sequence ID" value="CAA43712.1"/>
    <property type="molecule type" value="Genomic_DNA"/>
</dbReference>
<dbReference type="PIR" id="S16567">
    <property type="entry name" value="S16567"/>
</dbReference>
<dbReference type="SMR" id="P26223"/>
<dbReference type="CAZy" id="GH10">
    <property type="family name" value="Glycoside Hydrolase Family 10"/>
</dbReference>
<dbReference type="ESTHER" id="butfi-xynb">
    <property type="family name" value="BD-FAE"/>
</dbReference>
<dbReference type="UniPathway" id="UPA00114"/>
<dbReference type="GO" id="GO:0031176">
    <property type="term" value="F:endo-1,4-beta-xylanase activity"/>
    <property type="evidence" value="ECO:0007669"/>
    <property type="project" value="UniProtKB-EC"/>
</dbReference>
<dbReference type="GO" id="GO:0045493">
    <property type="term" value="P:xylan catabolic process"/>
    <property type="evidence" value="ECO:0007669"/>
    <property type="project" value="UniProtKB-UniPathway"/>
</dbReference>
<dbReference type="Gene3D" id="3.40.50.1820">
    <property type="entry name" value="alpha/beta hydrolase"/>
    <property type="match status" value="1"/>
</dbReference>
<dbReference type="Gene3D" id="3.20.20.80">
    <property type="entry name" value="Glycosidases"/>
    <property type="match status" value="1"/>
</dbReference>
<dbReference type="InterPro" id="IPR029058">
    <property type="entry name" value="AB_hydrolase_fold"/>
</dbReference>
<dbReference type="InterPro" id="IPR049492">
    <property type="entry name" value="BD-FAE-like_dom"/>
</dbReference>
<dbReference type="InterPro" id="IPR044846">
    <property type="entry name" value="GH10"/>
</dbReference>
<dbReference type="InterPro" id="IPR031158">
    <property type="entry name" value="GH10_AS"/>
</dbReference>
<dbReference type="InterPro" id="IPR001000">
    <property type="entry name" value="GH10_dom"/>
</dbReference>
<dbReference type="InterPro" id="IPR017853">
    <property type="entry name" value="Glycoside_hydrolase_SF"/>
</dbReference>
<dbReference type="PANTHER" id="PTHR31490:SF90">
    <property type="entry name" value="ENDO-1,4-BETA-XYLANASE A"/>
    <property type="match status" value="1"/>
</dbReference>
<dbReference type="PANTHER" id="PTHR31490">
    <property type="entry name" value="GLYCOSYL HYDROLASE"/>
    <property type="match status" value="1"/>
</dbReference>
<dbReference type="Pfam" id="PF20434">
    <property type="entry name" value="BD-FAE"/>
    <property type="match status" value="1"/>
</dbReference>
<dbReference type="Pfam" id="PF00331">
    <property type="entry name" value="Glyco_hydro_10"/>
    <property type="match status" value="1"/>
</dbReference>
<dbReference type="PRINTS" id="PR00134">
    <property type="entry name" value="GLHYDRLASE10"/>
</dbReference>
<dbReference type="SMART" id="SM00633">
    <property type="entry name" value="Glyco_10"/>
    <property type="match status" value="1"/>
</dbReference>
<dbReference type="SUPFAM" id="SSF51445">
    <property type="entry name" value="(Trans)glycosidases"/>
    <property type="match status" value="1"/>
</dbReference>
<dbReference type="SUPFAM" id="SSF53474">
    <property type="entry name" value="alpha/beta-Hydrolases"/>
    <property type="match status" value="1"/>
</dbReference>
<dbReference type="PROSITE" id="PS00591">
    <property type="entry name" value="GH10_1"/>
    <property type="match status" value="1"/>
</dbReference>
<dbReference type="PROSITE" id="PS51760">
    <property type="entry name" value="GH10_2"/>
    <property type="match status" value="1"/>
</dbReference>
<comment type="function">
    <text>B.fibrisolvens is located in the rumen of ruminant animals, where it contributes to the animal's digestion of plant material by hydrolyzing hemicellulose with its xylanases.</text>
</comment>
<comment type="catalytic activity">
    <reaction>
        <text>Endohydrolysis of (1-&gt;4)-beta-D-xylosidic linkages in xylans.</text>
        <dbReference type="EC" id="3.2.1.8"/>
    </reaction>
</comment>
<comment type="pathway">
    <text>Glycan degradation; xylan degradation.</text>
</comment>
<comment type="similarity">
    <text evidence="4">Belongs to the glycosyl hydrolase 10 (cellulase F) family.</text>
</comment>
<accession>P26223</accession>
<organism>
    <name type="scientific">Butyrivibrio fibrisolvens</name>
    <dbReference type="NCBI Taxonomy" id="831"/>
    <lineage>
        <taxon>Bacteria</taxon>
        <taxon>Bacillati</taxon>
        <taxon>Bacillota</taxon>
        <taxon>Clostridia</taxon>
        <taxon>Lachnospirales</taxon>
        <taxon>Lachnospiraceae</taxon>
        <taxon>Butyrivibrio</taxon>
    </lineage>
</organism>
<evidence type="ECO:0000250" key="1"/>
<evidence type="ECO:0000255" key="2">
    <source>
        <dbReference type="PROSITE-ProRule" id="PRU01096"/>
    </source>
</evidence>
<evidence type="ECO:0000255" key="3">
    <source>
        <dbReference type="PROSITE-ProRule" id="PRU10061"/>
    </source>
</evidence>
<evidence type="ECO:0000305" key="4"/>
<feature type="chain" id="PRO_0000184062" description="Endo-1,4-beta-xylanase B">
    <location>
        <begin position="1"/>
        <end position="635"/>
    </location>
</feature>
<feature type="domain" description="GH10" evidence="2">
    <location>
        <begin position="1"/>
        <end position="337"/>
    </location>
</feature>
<feature type="active site" description="Proton donor" evidence="1">
    <location>
        <position position="150"/>
    </location>
</feature>
<feature type="active site" description="Nucleophile" evidence="3">
    <location>
        <position position="255"/>
    </location>
</feature>